<feature type="chain" id="PRO_1000084593" description="tRNA pseudouridine synthase B">
    <location>
        <begin position="1"/>
        <end position="302"/>
    </location>
</feature>
<feature type="active site" description="Nucleophile" evidence="1">
    <location>
        <position position="45"/>
    </location>
</feature>
<accession>Q14G67</accession>
<protein>
    <recommendedName>
        <fullName evidence="1">tRNA pseudouridine synthase B</fullName>
        <ecNumber evidence="1">5.4.99.25</ecNumber>
    </recommendedName>
    <alternativeName>
        <fullName evidence="1">tRNA pseudouridine(55) synthase</fullName>
        <shortName evidence="1">Psi55 synthase</shortName>
    </alternativeName>
    <alternativeName>
        <fullName evidence="1">tRNA pseudouridylate synthase</fullName>
    </alternativeName>
    <alternativeName>
        <fullName evidence="1">tRNA-uridine isomerase</fullName>
    </alternativeName>
</protein>
<keyword id="KW-0413">Isomerase</keyword>
<keyword id="KW-0819">tRNA processing</keyword>
<sequence>MKKNRLNLNGVVVINKVKDISSNKVLQQLKYLFNAQKAGHTGTLDPMATGVLPICFGRATKIAQYLLDADKEYIATIRLGIETDSGDAEGEIIAKSINIPELSAEYLETVLAKFRGDVVQIPPMYSALKYNGQPLYKLAREGKTVEVKSRNIKIYELELLEFNIDSLKIRVKCSKGTYIRSLAIDIGKTLGCGGHLIALQRTQSGPFKLSEAFRLEQLKDLSFEQKIASITNIESVFIDKPIYSLLEEEKDDLYKRGLFADKPHLDGTVRIYDVEKFVAIAEFDKGKLINKKFFDQDILISE</sequence>
<organism>
    <name type="scientific">Francisella tularensis subsp. tularensis (strain FSC 198)</name>
    <dbReference type="NCBI Taxonomy" id="393115"/>
    <lineage>
        <taxon>Bacteria</taxon>
        <taxon>Pseudomonadati</taxon>
        <taxon>Pseudomonadota</taxon>
        <taxon>Gammaproteobacteria</taxon>
        <taxon>Thiotrichales</taxon>
        <taxon>Francisellaceae</taxon>
        <taxon>Francisella</taxon>
    </lineage>
</organism>
<evidence type="ECO:0000255" key="1">
    <source>
        <dbReference type="HAMAP-Rule" id="MF_01080"/>
    </source>
</evidence>
<reference key="1">
    <citation type="journal article" date="2007" name="PLoS ONE">
        <title>Genome sequencing shows that European isolates of Francisella tularensis subspecies tularensis are almost identical to US laboratory strain Schu S4.</title>
        <authorList>
            <person name="Chaudhuri R.R."/>
            <person name="Ren C.-P."/>
            <person name="Desmond L."/>
            <person name="Vincent G.A."/>
            <person name="Silman N.J."/>
            <person name="Brehm J.K."/>
            <person name="Elmore M.J."/>
            <person name="Hudson M.J."/>
            <person name="Forsman M."/>
            <person name="Isherwood K.E."/>
            <person name="Gurycova D."/>
            <person name="Minton N.P."/>
            <person name="Titball R.W."/>
            <person name="Pallen M.J."/>
            <person name="Vipond R."/>
        </authorList>
    </citation>
    <scope>NUCLEOTIDE SEQUENCE [LARGE SCALE GENOMIC DNA]</scope>
    <source>
        <strain>FSC 198</strain>
    </source>
</reference>
<proteinExistence type="inferred from homology"/>
<dbReference type="EC" id="5.4.99.25" evidence="1"/>
<dbReference type="EMBL" id="AM286280">
    <property type="protein sequence ID" value="CAL09570.1"/>
    <property type="molecule type" value="Genomic_DNA"/>
</dbReference>
<dbReference type="RefSeq" id="WP_003022450.1">
    <property type="nucleotide sequence ID" value="NC_008245.1"/>
</dbReference>
<dbReference type="SMR" id="Q14G67"/>
<dbReference type="KEGG" id="ftf:FTF1554c"/>
<dbReference type="HOGENOM" id="CLU_032087_0_3_6"/>
<dbReference type="GO" id="GO:0003723">
    <property type="term" value="F:RNA binding"/>
    <property type="evidence" value="ECO:0007669"/>
    <property type="project" value="InterPro"/>
</dbReference>
<dbReference type="GO" id="GO:0160148">
    <property type="term" value="F:tRNA pseudouridine(55) synthase activity"/>
    <property type="evidence" value="ECO:0007669"/>
    <property type="project" value="UniProtKB-EC"/>
</dbReference>
<dbReference type="GO" id="GO:1990481">
    <property type="term" value="P:mRNA pseudouridine synthesis"/>
    <property type="evidence" value="ECO:0007669"/>
    <property type="project" value="TreeGrafter"/>
</dbReference>
<dbReference type="GO" id="GO:0031119">
    <property type="term" value="P:tRNA pseudouridine synthesis"/>
    <property type="evidence" value="ECO:0007669"/>
    <property type="project" value="UniProtKB-UniRule"/>
</dbReference>
<dbReference type="CDD" id="cd02573">
    <property type="entry name" value="PseudoU_synth_EcTruB"/>
    <property type="match status" value="1"/>
</dbReference>
<dbReference type="FunFam" id="3.30.2350.10:FF:000011">
    <property type="entry name" value="tRNA pseudouridine synthase B"/>
    <property type="match status" value="1"/>
</dbReference>
<dbReference type="Gene3D" id="3.30.2350.10">
    <property type="entry name" value="Pseudouridine synthase"/>
    <property type="match status" value="1"/>
</dbReference>
<dbReference type="HAMAP" id="MF_01080">
    <property type="entry name" value="TruB_bact"/>
    <property type="match status" value="1"/>
</dbReference>
<dbReference type="InterPro" id="IPR020103">
    <property type="entry name" value="PsdUridine_synth_cat_dom_sf"/>
</dbReference>
<dbReference type="InterPro" id="IPR002501">
    <property type="entry name" value="PsdUridine_synth_N"/>
</dbReference>
<dbReference type="InterPro" id="IPR014780">
    <property type="entry name" value="tRNA_psdUridine_synth_TruB"/>
</dbReference>
<dbReference type="InterPro" id="IPR032819">
    <property type="entry name" value="TruB_C"/>
</dbReference>
<dbReference type="NCBIfam" id="TIGR00431">
    <property type="entry name" value="TruB"/>
    <property type="match status" value="1"/>
</dbReference>
<dbReference type="PANTHER" id="PTHR13767:SF2">
    <property type="entry name" value="PSEUDOURIDYLATE SYNTHASE TRUB1"/>
    <property type="match status" value="1"/>
</dbReference>
<dbReference type="PANTHER" id="PTHR13767">
    <property type="entry name" value="TRNA-PSEUDOURIDINE SYNTHASE"/>
    <property type="match status" value="1"/>
</dbReference>
<dbReference type="Pfam" id="PF16198">
    <property type="entry name" value="TruB_C_2"/>
    <property type="match status" value="1"/>
</dbReference>
<dbReference type="Pfam" id="PF01509">
    <property type="entry name" value="TruB_N"/>
    <property type="match status" value="1"/>
</dbReference>
<dbReference type="SUPFAM" id="SSF55120">
    <property type="entry name" value="Pseudouridine synthase"/>
    <property type="match status" value="1"/>
</dbReference>
<gene>
    <name evidence="1" type="primary">truB</name>
    <name type="ordered locus">FTF1554c</name>
</gene>
<name>TRUB_FRAT1</name>
<comment type="function">
    <text evidence="1">Responsible for synthesis of pseudouridine from uracil-55 in the psi GC loop of transfer RNAs.</text>
</comment>
<comment type="catalytic activity">
    <reaction evidence="1">
        <text>uridine(55) in tRNA = pseudouridine(55) in tRNA</text>
        <dbReference type="Rhea" id="RHEA:42532"/>
        <dbReference type="Rhea" id="RHEA-COMP:10101"/>
        <dbReference type="Rhea" id="RHEA-COMP:10102"/>
        <dbReference type="ChEBI" id="CHEBI:65314"/>
        <dbReference type="ChEBI" id="CHEBI:65315"/>
        <dbReference type="EC" id="5.4.99.25"/>
    </reaction>
</comment>
<comment type="similarity">
    <text evidence="1">Belongs to the pseudouridine synthase TruB family. Type 1 subfamily.</text>
</comment>